<name>RNC_CORDI</name>
<comment type="function">
    <text evidence="1">Digests double-stranded RNA. Involved in the processing of primary rRNA transcript to yield the immediate precursors to the large and small rRNAs (23S and 16S). Processes some mRNAs, and tRNAs when they are encoded in the rRNA operon. Processes pre-crRNA and tracrRNA of type II CRISPR loci if present in the organism.</text>
</comment>
<comment type="catalytic activity">
    <reaction evidence="1">
        <text>Endonucleolytic cleavage to 5'-phosphomonoester.</text>
        <dbReference type="EC" id="3.1.26.3"/>
    </reaction>
</comment>
<comment type="cofactor">
    <cofactor evidence="1">
        <name>Mg(2+)</name>
        <dbReference type="ChEBI" id="CHEBI:18420"/>
    </cofactor>
</comment>
<comment type="subunit">
    <text evidence="1">Homodimer.</text>
</comment>
<comment type="subcellular location">
    <subcellularLocation>
        <location evidence="1">Cytoplasm</location>
    </subcellularLocation>
</comment>
<comment type="similarity">
    <text evidence="1">Belongs to the ribonuclease III family.</text>
</comment>
<dbReference type="EC" id="3.1.26.3" evidence="1"/>
<dbReference type="EMBL" id="BX248358">
    <property type="protein sequence ID" value="CAE50069.1"/>
    <property type="molecule type" value="Genomic_DNA"/>
</dbReference>
<dbReference type="RefSeq" id="WP_003852039.1">
    <property type="nucleotide sequence ID" value="NC_002935.2"/>
</dbReference>
<dbReference type="SMR" id="Q6NGH3"/>
<dbReference type="STRING" id="257309.DIP1544"/>
<dbReference type="GeneID" id="97332350"/>
<dbReference type="KEGG" id="cdi:DIP1544"/>
<dbReference type="HOGENOM" id="CLU_000907_1_2_11"/>
<dbReference type="Proteomes" id="UP000002198">
    <property type="component" value="Chromosome"/>
</dbReference>
<dbReference type="GO" id="GO:0005737">
    <property type="term" value="C:cytoplasm"/>
    <property type="evidence" value="ECO:0007669"/>
    <property type="project" value="UniProtKB-SubCell"/>
</dbReference>
<dbReference type="GO" id="GO:0003725">
    <property type="term" value="F:double-stranded RNA binding"/>
    <property type="evidence" value="ECO:0007669"/>
    <property type="project" value="TreeGrafter"/>
</dbReference>
<dbReference type="GO" id="GO:0046872">
    <property type="term" value="F:metal ion binding"/>
    <property type="evidence" value="ECO:0007669"/>
    <property type="project" value="UniProtKB-KW"/>
</dbReference>
<dbReference type="GO" id="GO:0004525">
    <property type="term" value="F:ribonuclease III activity"/>
    <property type="evidence" value="ECO:0007669"/>
    <property type="project" value="UniProtKB-UniRule"/>
</dbReference>
<dbReference type="GO" id="GO:0019843">
    <property type="term" value="F:rRNA binding"/>
    <property type="evidence" value="ECO:0007669"/>
    <property type="project" value="UniProtKB-KW"/>
</dbReference>
<dbReference type="GO" id="GO:0006397">
    <property type="term" value="P:mRNA processing"/>
    <property type="evidence" value="ECO:0007669"/>
    <property type="project" value="UniProtKB-UniRule"/>
</dbReference>
<dbReference type="GO" id="GO:0010468">
    <property type="term" value="P:regulation of gene expression"/>
    <property type="evidence" value="ECO:0007669"/>
    <property type="project" value="TreeGrafter"/>
</dbReference>
<dbReference type="GO" id="GO:0006364">
    <property type="term" value="P:rRNA processing"/>
    <property type="evidence" value="ECO:0007669"/>
    <property type="project" value="UniProtKB-UniRule"/>
</dbReference>
<dbReference type="GO" id="GO:0008033">
    <property type="term" value="P:tRNA processing"/>
    <property type="evidence" value="ECO:0007669"/>
    <property type="project" value="UniProtKB-KW"/>
</dbReference>
<dbReference type="CDD" id="cd10845">
    <property type="entry name" value="DSRM_RNAse_III_family"/>
    <property type="match status" value="1"/>
</dbReference>
<dbReference type="CDD" id="cd00593">
    <property type="entry name" value="RIBOc"/>
    <property type="match status" value="1"/>
</dbReference>
<dbReference type="FunFam" id="1.10.1520.10:FF:000001">
    <property type="entry name" value="Ribonuclease 3"/>
    <property type="match status" value="1"/>
</dbReference>
<dbReference type="FunFam" id="3.30.160.20:FF:000003">
    <property type="entry name" value="Ribonuclease 3"/>
    <property type="match status" value="1"/>
</dbReference>
<dbReference type="Gene3D" id="3.30.160.20">
    <property type="match status" value="1"/>
</dbReference>
<dbReference type="Gene3D" id="1.10.1520.10">
    <property type="entry name" value="Ribonuclease III domain"/>
    <property type="match status" value="1"/>
</dbReference>
<dbReference type="HAMAP" id="MF_00104">
    <property type="entry name" value="RNase_III"/>
    <property type="match status" value="1"/>
</dbReference>
<dbReference type="InterPro" id="IPR014720">
    <property type="entry name" value="dsRBD_dom"/>
</dbReference>
<dbReference type="InterPro" id="IPR011907">
    <property type="entry name" value="RNase_III"/>
</dbReference>
<dbReference type="InterPro" id="IPR000999">
    <property type="entry name" value="RNase_III_dom"/>
</dbReference>
<dbReference type="InterPro" id="IPR036389">
    <property type="entry name" value="RNase_III_sf"/>
</dbReference>
<dbReference type="NCBIfam" id="TIGR02191">
    <property type="entry name" value="RNaseIII"/>
    <property type="match status" value="1"/>
</dbReference>
<dbReference type="PANTHER" id="PTHR11207:SF0">
    <property type="entry name" value="RIBONUCLEASE 3"/>
    <property type="match status" value="1"/>
</dbReference>
<dbReference type="PANTHER" id="PTHR11207">
    <property type="entry name" value="RIBONUCLEASE III"/>
    <property type="match status" value="1"/>
</dbReference>
<dbReference type="Pfam" id="PF00035">
    <property type="entry name" value="dsrm"/>
    <property type="match status" value="1"/>
</dbReference>
<dbReference type="Pfam" id="PF14622">
    <property type="entry name" value="Ribonucleas_3_3"/>
    <property type="match status" value="1"/>
</dbReference>
<dbReference type="SMART" id="SM00358">
    <property type="entry name" value="DSRM"/>
    <property type="match status" value="1"/>
</dbReference>
<dbReference type="SMART" id="SM00535">
    <property type="entry name" value="RIBOc"/>
    <property type="match status" value="1"/>
</dbReference>
<dbReference type="SUPFAM" id="SSF54768">
    <property type="entry name" value="dsRNA-binding domain-like"/>
    <property type="match status" value="1"/>
</dbReference>
<dbReference type="SUPFAM" id="SSF69065">
    <property type="entry name" value="RNase III domain-like"/>
    <property type="match status" value="1"/>
</dbReference>
<dbReference type="PROSITE" id="PS50137">
    <property type="entry name" value="DS_RBD"/>
    <property type="match status" value="1"/>
</dbReference>
<dbReference type="PROSITE" id="PS00517">
    <property type="entry name" value="RNASE_3_1"/>
    <property type="match status" value="1"/>
</dbReference>
<dbReference type="PROSITE" id="PS50142">
    <property type="entry name" value="RNASE_3_2"/>
    <property type="match status" value="1"/>
</dbReference>
<gene>
    <name evidence="1" type="primary">rnc</name>
    <name type="ordered locus">DIP1544</name>
</gene>
<organism>
    <name type="scientific">Corynebacterium diphtheriae (strain ATCC 700971 / NCTC 13129 / Biotype gravis)</name>
    <dbReference type="NCBI Taxonomy" id="257309"/>
    <lineage>
        <taxon>Bacteria</taxon>
        <taxon>Bacillati</taxon>
        <taxon>Actinomycetota</taxon>
        <taxon>Actinomycetes</taxon>
        <taxon>Mycobacteriales</taxon>
        <taxon>Corynebacteriaceae</taxon>
        <taxon>Corynebacterium</taxon>
    </lineage>
</organism>
<sequence>MSRRKKRVTGEQALRLEFESVDHQPLIDALGVDIPRELLVLALTHRSFANENGMLPNNERLEFLGDSVLGLSVAGQLYQQYTSSPESDISKMRASIVSRYGLADIAREINLGQHILLGKGEQLHDGRSKDSILADTTEALLGAIYLAHGFEIARDTVLRLFKHKIDTASATGLHQDWKTTLQERLAERNLEMPTYTSTVTGPEHEQTFTAEVAVHGTVLGTGVGTNKKLAEQAAAHKAVGFLQDNPAFV</sequence>
<keyword id="KW-0963">Cytoplasm</keyword>
<keyword id="KW-0255">Endonuclease</keyword>
<keyword id="KW-0378">Hydrolase</keyword>
<keyword id="KW-0460">Magnesium</keyword>
<keyword id="KW-0479">Metal-binding</keyword>
<keyword id="KW-0507">mRNA processing</keyword>
<keyword id="KW-0540">Nuclease</keyword>
<keyword id="KW-1185">Reference proteome</keyword>
<keyword id="KW-0694">RNA-binding</keyword>
<keyword id="KW-0698">rRNA processing</keyword>
<keyword id="KW-0699">rRNA-binding</keyword>
<keyword id="KW-0819">tRNA processing</keyword>
<feature type="chain" id="PRO_0000228518" description="Ribonuclease 3">
    <location>
        <begin position="1"/>
        <end position="249"/>
    </location>
</feature>
<feature type="domain" description="RNase III" evidence="1">
    <location>
        <begin position="21"/>
        <end position="149"/>
    </location>
</feature>
<feature type="domain" description="DRBM" evidence="1">
    <location>
        <begin position="176"/>
        <end position="244"/>
    </location>
</feature>
<feature type="active site" evidence="1">
    <location>
        <position position="66"/>
    </location>
</feature>
<feature type="active site" evidence="1">
    <location>
        <position position="138"/>
    </location>
</feature>
<feature type="binding site" evidence="1">
    <location>
        <position position="62"/>
    </location>
    <ligand>
        <name>Mg(2+)</name>
        <dbReference type="ChEBI" id="CHEBI:18420"/>
    </ligand>
</feature>
<feature type="binding site" evidence="1">
    <location>
        <position position="135"/>
    </location>
    <ligand>
        <name>Mg(2+)</name>
        <dbReference type="ChEBI" id="CHEBI:18420"/>
    </ligand>
</feature>
<feature type="binding site" evidence="1">
    <location>
        <position position="138"/>
    </location>
    <ligand>
        <name>Mg(2+)</name>
        <dbReference type="ChEBI" id="CHEBI:18420"/>
    </ligand>
</feature>
<proteinExistence type="inferred from homology"/>
<protein>
    <recommendedName>
        <fullName evidence="1">Ribonuclease 3</fullName>
        <ecNumber evidence="1">3.1.26.3</ecNumber>
    </recommendedName>
    <alternativeName>
        <fullName evidence="1">Ribonuclease III</fullName>
        <shortName evidence="1">RNase III</shortName>
    </alternativeName>
</protein>
<evidence type="ECO:0000255" key="1">
    <source>
        <dbReference type="HAMAP-Rule" id="MF_00104"/>
    </source>
</evidence>
<accession>Q6NGH3</accession>
<reference key="1">
    <citation type="journal article" date="2003" name="Nucleic Acids Res.">
        <title>The complete genome sequence and analysis of Corynebacterium diphtheriae NCTC13129.</title>
        <authorList>
            <person name="Cerdeno-Tarraga A.-M."/>
            <person name="Efstratiou A."/>
            <person name="Dover L.G."/>
            <person name="Holden M.T.G."/>
            <person name="Pallen M.J."/>
            <person name="Bentley S.D."/>
            <person name="Besra G.S."/>
            <person name="Churcher C.M."/>
            <person name="James K.D."/>
            <person name="De Zoysa A."/>
            <person name="Chillingworth T."/>
            <person name="Cronin A."/>
            <person name="Dowd L."/>
            <person name="Feltwell T."/>
            <person name="Hamlin N."/>
            <person name="Holroyd S."/>
            <person name="Jagels K."/>
            <person name="Moule S."/>
            <person name="Quail M.A."/>
            <person name="Rabbinowitsch E."/>
            <person name="Rutherford K.M."/>
            <person name="Thomson N.R."/>
            <person name="Unwin L."/>
            <person name="Whitehead S."/>
            <person name="Barrell B.G."/>
            <person name="Parkhill J."/>
        </authorList>
    </citation>
    <scope>NUCLEOTIDE SEQUENCE [LARGE SCALE GENOMIC DNA]</scope>
    <source>
        <strain>ATCC 700971 / NCTC 13129 / Biotype gravis</strain>
    </source>
</reference>